<reference key="1">
    <citation type="journal article" date="2003" name="Appl. Microbiol. Biotechnol.">
        <title>The Corynebacterium glutamicum genome: features and impacts on biotechnological processes.</title>
        <authorList>
            <person name="Ikeda M."/>
            <person name="Nakagawa S."/>
        </authorList>
    </citation>
    <scope>NUCLEOTIDE SEQUENCE [LARGE SCALE GENOMIC DNA]</scope>
    <source>
        <strain>ATCC 13032 / DSM 20300 / JCM 1318 / BCRC 11384 / CCUG 27702 / LMG 3730 / NBRC 12168 / NCIMB 10025 / NRRL B-2784 / 534</strain>
    </source>
</reference>
<reference key="2">
    <citation type="journal article" date="2003" name="J. Biotechnol.">
        <title>The complete Corynebacterium glutamicum ATCC 13032 genome sequence and its impact on the production of L-aspartate-derived amino acids and vitamins.</title>
        <authorList>
            <person name="Kalinowski J."/>
            <person name="Bathe B."/>
            <person name="Bartels D."/>
            <person name="Bischoff N."/>
            <person name="Bott M."/>
            <person name="Burkovski A."/>
            <person name="Dusch N."/>
            <person name="Eggeling L."/>
            <person name="Eikmanns B.J."/>
            <person name="Gaigalat L."/>
            <person name="Goesmann A."/>
            <person name="Hartmann M."/>
            <person name="Huthmacher K."/>
            <person name="Kraemer R."/>
            <person name="Linke B."/>
            <person name="McHardy A.C."/>
            <person name="Meyer F."/>
            <person name="Moeckel B."/>
            <person name="Pfefferle W."/>
            <person name="Puehler A."/>
            <person name="Rey D.A."/>
            <person name="Rueckert C."/>
            <person name="Rupp O."/>
            <person name="Sahm H."/>
            <person name="Wendisch V.F."/>
            <person name="Wiegraebe I."/>
            <person name="Tauch A."/>
        </authorList>
    </citation>
    <scope>NUCLEOTIDE SEQUENCE [LARGE SCALE GENOMIC DNA]</scope>
    <source>
        <strain>ATCC 13032 / DSM 20300 / JCM 1318 / BCRC 11384 / CCUG 27702 / LMG 3730 / NBRC 12168 / NCIMB 10025 / NRRL B-2784 / 534</strain>
    </source>
</reference>
<organism>
    <name type="scientific">Corynebacterium glutamicum (strain ATCC 13032 / DSM 20300 / JCM 1318 / BCRC 11384 / CCUG 27702 / LMG 3730 / NBRC 12168 / NCIMB 10025 / NRRL B-2784 / 534)</name>
    <dbReference type="NCBI Taxonomy" id="196627"/>
    <lineage>
        <taxon>Bacteria</taxon>
        <taxon>Bacillati</taxon>
        <taxon>Actinomycetota</taxon>
        <taxon>Actinomycetes</taxon>
        <taxon>Mycobacteriales</taxon>
        <taxon>Corynebacteriaceae</taxon>
        <taxon>Corynebacterium</taxon>
    </lineage>
</organism>
<name>SYG_CORGL</name>
<protein>
    <recommendedName>
        <fullName evidence="1">Glycine--tRNA ligase</fullName>
        <ecNumber evidence="1">6.1.1.14</ecNumber>
    </recommendedName>
    <alternativeName>
        <fullName evidence="1">Glycyl-tRNA synthetase</fullName>
        <shortName evidence="1">GlyRS</shortName>
    </alternativeName>
</protein>
<sequence>MAQQSIIDTVVNLCKRRGLVYPCGEIYGGTRSAWDYGPLGVELKENIKRQWWRSMVTSRPDVVGVDTSVILPRQVWVTSGHVEVFTDPLVESLNTHKRYRADHLLEQYEEKHGHPPVNGLADINDPETGQPGNWTEPKAFSGLLKTFLGPVDDEEGLHYLRPETAQGIFVNFKNVMNTSRMKPPFGIANIGKSFRNEITPGNFIFRTREFEQMEMEFFVKPGEDEEWHQHWIDTRLQWYINLGIKPENLRLYEHPQEKLSHYSKRTVDIEYAFNFANTKWGELEGIANRTDYDLRVHSEGSGEDLSFFDQETNERWIPFVIEPAAGLGRAMMMFLMDAYHEDEAPNSKGGVDKRVVLKLDRRLAPVKVAVLPLSKKDTLTPLAEKLAAELREFWNVDYDTSGAIGRRYRRQDEIGTPFCVTVDFDSLEDNAVTVRERDTMEQVRVPLDELQGYLAQRLIGC</sequence>
<keyword id="KW-0030">Aminoacyl-tRNA synthetase</keyword>
<keyword id="KW-0067">ATP-binding</keyword>
<keyword id="KW-0963">Cytoplasm</keyword>
<keyword id="KW-0436">Ligase</keyword>
<keyword id="KW-0547">Nucleotide-binding</keyword>
<keyword id="KW-0648">Protein biosynthesis</keyword>
<keyword id="KW-1185">Reference proteome</keyword>
<proteinExistence type="inferred from homology"/>
<feature type="chain" id="PRO_0000072956" description="Glycine--tRNA ligase">
    <location>
        <begin position="1"/>
        <end position="461"/>
    </location>
</feature>
<feature type="binding site" evidence="1">
    <location>
        <position position="100"/>
    </location>
    <ligand>
        <name>substrate</name>
    </ligand>
</feature>
<feature type="binding site" evidence="1">
    <location>
        <position position="163"/>
    </location>
    <ligand>
        <name>substrate</name>
    </ligand>
</feature>
<feature type="binding site" evidence="1">
    <location>
        <begin position="195"/>
        <end position="197"/>
    </location>
    <ligand>
        <name>ATP</name>
        <dbReference type="ChEBI" id="CHEBI:30616"/>
    </ligand>
</feature>
<feature type="binding site" evidence="1">
    <location>
        <begin position="205"/>
        <end position="210"/>
    </location>
    <ligand>
        <name>ATP</name>
        <dbReference type="ChEBI" id="CHEBI:30616"/>
    </ligand>
</feature>
<feature type="binding site" evidence="1">
    <location>
        <begin position="210"/>
        <end position="214"/>
    </location>
    <ligand>
        <name>substrate</name>
    </ligand>
</feature>
<feature type="binding site" evidence="1">
    <location>
        <begin position="282"/>
        <end position="283"/>
    </location>
    <ligand>
        <name>ATP</name>
        <dbReference type="ChEBI" id="CHEBI:30616"/>
    </ligand>
</feature>
<feature type="binding site" evidence="1">
    <location>
        <begin position="322"/>
        <end position="326"/>
    </location>
    <ligand>
        <name>substrate</name>
    </ligand>
</feature>
<feature type="binding site" evidence="1">
    <location>
        <begin position="326"/>
        <end position="329"/>
    </location>
    <ligand>
        <name>ATP</name>
        <dbReference type="ChEBI" id="CHEBI:30616"/>
    </ligand>
</feature>
<accession>Q8NNC6</accession>
<accession>Q6M3G2</accession>
<dbReference type="EC" id="6.1.1.14" evidence="1"/>
<dbReference type="EMBL" id="BA000036">
    <property type="protein sequence ID" value="BAB99671.1"/>
    <property type="molecule type" value="Genomic_DNA"/>
</dbReference>
<dbReference type="EMBL" id="BX927154">
    <property type="protein sequence ID" value="CAF20620.1"/>
    <property type="molecule type" value="Genomic_DNA"/>
</dbReference>
<dbReference type="RefSeq" id="NP_601478.1">
    <property type="nucleotide sequence ID" value="NC_003450.3"/>
</dbReference>
<dbReference type="RefSeq" id="WP_003857047.1">
    <property type="nucleotide sequence ID" value="NC_006958.1"/>
</dbReference>
<dbReference type="SMR" id="Q8NNC6"/>
<dbReference type="STRING" id="196627.cg2499"/>
<dbReference type="KEGG" id="cgb:cg2499"/>
<dbReference type="KEGG" id="cgl:Cgl2278"/>
<dbReference type="PATRIC" id="fig|196627.13.peg.2211"/>
<dbReference type="eggNOG" id="COG0423">
    <property type="taxonomic scope" value="Bacteria"/>
</dbReference>
<dbReference type="HOGENOM" id="CLU_015515_2_1_11"/>
<dbReference type="OrthoDB" id="9760853at2"/>
<dbReference type="BioCyc" id="CORYNE:G18NG-11875-MONOMER"/>
<dbReference type="Proteomes" id="UP000000582">
    <property type="component" value="Chromosome"/>
</dbReference>
<dbReference type="Proteomes" id="UP000001009">
    <property type="component" value="Chromosome"/>
</dbReference>
<dbReference type="GO" id="GO:0005737">
    <property type="term" value="C:cytoplasm"/>
    <property type="evidence" value="ECO:0007669"/>
    <property type="project" value="UniProtKB-SubCell"/>
</dbReference>
<dbReference type="GO" id="GO:0005524">
    <property type="term" value="F:ATP binding"/>
    <property type="evidence" value="ECO:0007669"/>
    <property type="project" value="UniProtKB-UniRule"/>
</dbReference>
<dbReference type="GO" id="GO:0004820">
    <property type="term" value="F:glycine-tRNA ligase activity"/>
    <property type="evidence" value="ECO:0000250"/>
    <property type="project" value="UniProtKB"/>
</dbReference>
<dbReference type="GO" id="GO:0046983">
    <property type="term" value="F:protein dimerization activity"/>
    <property type="evidence" value="ECO:0000250"/>
    <property type="project" value="UniProtKB"/>
</dbReference>
<dbReference type="GO" id="GO:0006426">
    <property type="term" value="P:glycyl-tRNA aminoacylation"/>
    <property type="evidence" value="ECO:0007669"/>
    <property type="project" value="UniProtKB-UniRule"/>
</dbReference>
<dbReference type="CDD" id="cd00774">
    <property type="entry name" value="GlyRS-like_core"/>
    <property type="match status" value="1"/>
</dbReference>
<dbReference type="CDD" id="cd00858">
    <property type="entry name" value="GlyRS_anticodon"/>
    <property type="match status" value="1"/>
</dbReference>
<dbReference type="FunFam" id="3.40.50.800:FF:000002">
    <property type="entry name" value="Glycine--tRNA ligase"/>
    <property type="match status" value="1"/>
</dbReference>
<dbReference type="Gene3D" id="3.40.50.800">
    <property type="entry name" value="Anticodon-binding domain"/>
    <property type="match status" value="1"/>
</dbReference>
<dbReference type="Gene3D" id="3.30.930.10">
    <property type="entry name" value="Bira Bifunctional Protein, Domain 2"/>
    <property type="match status" value="1"/>
</dbReference>
<dbReference type="HAMAP" id="MF_00253_B">
    <property type="entry name" value="Gly_tRNA_synth_B"/>
    <property type="match status" value="1"/>
</dbReference>
<dbReference type="InterPro" id="IPR002314">
    <property type="entry name" value="aa-tRNA-synt_IIb"/>
</dbReference>
<dbReference type="InterPro" id="IPR006195">
    <property type="entry name" value="aa-tRNA-synth_II"/>
</dbReference>
<dbReference type="InterPro" id="IPR045864">
    <property type="entry name" value="aa-tRNA-synth_II/BPL/LPL"/>
</dbReference>
<dbReference type="InterPro" id="IPR004154">
    <property type="entry name" value="Anticodon-bd"/>
</dbReference>
<dbReference type="InterPro" id="IPR036621">
    <property type="entry name" value="Anticodon-bd_dom_sf"/>
</dbReference>
<dbReference type="InterPro" id="IPR027031">
    <property type="entry name" value="Gly-tRNA_synthase/POLG2"/>
</dbReference>
<dbReference type="InterPro" id="IPR022961">
    <property type="entry name" value="Gly_tRNA_ligase_bac"/>
</dbReference>
<dbReference type="InterPro" id="IPR033731">
    <property type="entry name" value="GlyRS-like_core"/>
</dbReference>
<dbReference type="InterPro" id="IPR002315">
    <property type="entry name" value="tRNA-synt_gly"/>
</dbReference>
<dbReference type="NCBIfam" id="TIGR00389">
    <property type="entry name" value="glyS_dimeric"/>
    <property type="match status" value="1"/>
</dbReference>
<dbReference type="NCBIfam" id="NF003211">
    <property type="entry name" value="PRK04173.1"/>
    <property type="match status" value="1"/>
</dbReference>
<dbReference type="PANTHER" id="PTHR10745:SF8">
    <property type="entry name" value="DNA POLYMERASE SUBUNIT GAMMA-2, MITOCHONDRIAL"/>
    <property type="match status" value="1"/>
</dbReference>
<dbReference type="PANTHER" id="PTHR10745">
    <property type="entry name" value="GLYCYL-TRNA SYNTHETASE/DNA POLYMERASE SUBUNIT GAMMA-2"/>
    <property type="match status" value="1"/>
</dbReference>
<dbReference type="Pfam" id="PF03129">
    <property type="entry name" value="HGTP_anticodon"/>
    <property type="match status" value="1"/>
</dbReference>
<dbReference type="Pfam" id="PF00587">
    <property type="entry name" value="tRNA-synt_2b"/>
    <property type="match status" value="1"/>
</dbReference>
<dbReference type="PRINTS" id="PR01043">
    <property type="entry name" value="TRNASYNTHGLY"/>
</dbReference>
<dbReference type="SUPFAM" id="SSF52954">
    <property type="entry name" value="Class II aaRS ABD-related"/>
    <property type="match status" value="1"/>
</dbReference>
<dbReference type="SUPFAM" id="SSF55681">
    <property type="entry name" value="Class II aaRS and biotin synthetases"/>
    <property type="match status" value="1"/>
</dbReference>
<dbReference type="PROSITE" id="PS50862">
    <property type="entry name" value="AA_TRNA_LIGASE_II"/>
    <property type="match status" value="1"/>
</dbReference>
<comment type="function">
    <text evidence="1">Catalyzes the attachment of glycine to tRNA(Gly).</text>
</comment>
<comment type="catalytic activity">
    <reaction evidence="1">
        <text>tRNA(Gly) + glycine + ATP = glycyl-tRNA(Gly) + AMP + diphosphate</text>
        <dbReference type="Rhea" id="RHEA:16013"/>
        <dbReference type="Rhea" id="RHEA-COMP:9664"/>
        <dbReference type="Rhea" id="RHEA-COMP:9683"/>
        <dbReference type="ChEBI" id="CHEBI:30616"/>
        <dbReference type="ChEBI" id="CHEBI:33019"/>
        <dbReference type="ChEBI" id="CHEBI:57305"/>
        <dbReference type="ChEBI" id="CHEBI:78442"/>
        <dbReference type="ChEBI" id="CHEBI:78522"/>
        <dbReference type="ChEBI" id="CHEBI:456215"/>
        <dbReference type="EC" id="6.1.1.14"/>
    </reaction>
</comment>
<comment type="subunit">
    <text evidence="1">Homodimer.</text>
</comment>
<comment type="subcellular location">
    <subcellularLocation>
        <location evidence="1">Cytoplasm</location>
    </subcellularLocation>
</comment>
<comment type="similarity">
    <text evidence="1">Belongs to the class-II aminoacyl-tRNA synthetase family.</text>
</comment>
<gene>
    <name evidence="1" type="primary">glyQS</name>
    <name type="synonym">glyS</name>
    <name type="ordered locus">Cgl2278</name>
    <name type="ordered locus">cg2499</name>
</gene>
<evidence type="ECO:0000255" key="1">
    <source>
        <dbReference type="HAMAP-Rule" id="MF_00253"/>
    </source>
</evidence>